<reference key="1">
    <citation type="journal article" date="2000" name="Nature">
        <title>Sequence and analysis of chromosome 5 of the plant Arabidopsis thaliana.</title>
        <authorList>
            <person name="Tabata S."/>
            <person name="Kaneko T."/>
            <person name="Nakamura Y."/>
            <person name="Kotani H."/>
            <person name="Kato T."/>
            <person name="Asamizu E."/>
            <person name="Miyajima N."/>
            <person name="Sasamoto S."/>
            <person name="Kimura T."/>
            <person name="Hosouchi T."/>
            <person name="Kawashima K."/>
            <person name="Kohara M."/>
            <person name="Matsumoto M."/>
            <person name="Matsuno A."/>
            <person name="Muraki A."/>
            <person name="Nakayama S."/>
            <person name="Nakazaki N."/>
            <person name="Naruo K."/>
            <person name="Okumura S."/>
            <person name="Shinpo S."/>
            <person name="Takeuchi C."/>
            <person name="Wada T."/>
            <person name="Watanabe A."/>
            <person name="Yamada M."/>
            <person name="Yasuda M."/>
            <person name="Sato S."/>
            <person name="de la Bastide M."/>
            <person name="Huang E."/>
            <person name="Spiegel L."/>
            <person name="Gnoj L."/>
            <person name="O'Shaughnessy A."/>
            <person name="Preston R."/>
            <person name="Habermann K."/>
            <person name="Murray J."/>
            <person name="Johnson D."/>
            <person name="Rohlfing T."/>
            <person name="Nelson J."/>
            <person name="Stoneking T."/>
            <person name="Pepin K."/>
            <person name="Spieth J."/>
            <person name="Sekhon M."/>
            <person name="Armstrong J."/>
            <person name="Becker M."/>
            <person name="Belter E."/>
            <person name="Cordum H."/>
            <person name="Cordes M."/>
            <person name="Courtney L."/>
            <person name="Courtney W."/>
            <person name="Dante M."/>
            <person name="Du H."/>
            <person name="Edwards J."/>
            <person name="Fryman J."/>
            <person name="Haakensen B."/>
            <person name="Lamar E."/>
            <person name="Latreille P."/>
            <person name="Leonard S."/>
            <person name="Meyer R."/>
            <person name="Mulvaney E."/>
            <person name="Ozersky P."/>
            <person name="Riley A."/>
            <person name="Strowmatt C."/>
            <person name="Wagner-McPherson C."/>
            <person name="Wollam A."/>
            <person name="Yoakum M."/>
            <person name="Bell M."/>
            <person name="Dedhia N."/>
            <person name="Parnell L."/>
            <person name="Shah R."/>
            <person name="Rodriguez M."/>
            <person name="Hoon See L."/>
            <person name="Vil D."/>
            <person name="Baker J."/>
            <person name="Kirchoff K."/>
            <person name="Toth K."/>
            <person name="King L."/>
            <person name="Bahret A."/>
            <person name="Miller B."/>
            <person name="Marra M.A."/>
            <person name="Martienssen R."/>
            <person name="McCombie W.R."/>
            <person name="Wilson R.K."/>
            <person name="Murphy G."/>
            <person name="Bancroft I."/>
            <person name="Volckaert G."/>
            <person name="Wambutt R."/>
            <person name="Duesterhoeft A."/>
            <person name="Stiekema W."/>
            <person name="Pohl T."/>
            <person name="Entian K.-D."/>
            <person name="Terryn N."/>
            <person name="Hartley N."/>
            <person name="Bent E."/>
            <person name="Johnson S."/>
            <person name="Langham S.-A."/>
            <person name="McCullagh B."/>
            <person name="Robben J."/>
            <person name="Grymonprez B."/>
            <person name="Zimmermann W."/>
            <person name="Ramsperger U."/>
            <person name="Wedler H."/>
            <person name="Balke K."/>
            <person name="Wedler E."/>
            <person name="Peters S."/>
            <person name="van Staveren M."/>
            <person name="Dirkse W."/>
            <person name="Mooijman P."/>
            <person name="Klein Lankhorst R."/>
            <person name="Weitzenegger T."/>
            <person name="Bothe G."/>
            <person name="Rose M."/>
            <person name="Hauf J."/>
            <person name="Berneiser S."/>
            <person name="Hempel S."/>
            <person name="Feldpausch M."/>
            <person name="Lamberth S."/>
            <person name="Villarroel R."/>
            <person name="Gielen J."/>
            <person name="Ardiles W."/>
            <person name="Bents O."/>
            <person name="Lemcke K."/>
            <person name="Kolesov G."/>
            <person name="Mayer K.F.X."/>
            <person name="Rudd S."/>
            <person name="Schoof H."/>
            <person name="Schueller C."/>
            <person name="Zaccaria P."/>
            <person name="Mewes H.-W."/>
            <person name="Bevan M."/>
            <person name="Fransz P.F."/>
        </authorList>
    </citation>
    <scope>NUCLEOTIDE SEQUENCE [LARGE SCALE GENOMIC DNA]</scope>
    <source>
        <strain>cv. Columbia</strain>
    </source>
</reference>
<reference key="2">
    <citation type="journal article" date="2017" name="Plant J.">
        <title>Araport11: a complete reannotation of the Arabidopsis thaliana reference genome.</title>
        <authorList>
            <person name="Cheng C.Y."/>
            <person name="Krishnakumar V."/>
            <person name="Chan A.P."/>
            <person name="Thibaud-Nissen F."/>
            <person name="Schobel S."/>
            <person name="Town C.D."/>
        </authorList>
    </citation>
    <scope>GENOME REANNOTATION</scope>
    <source>
        <strain>cv. Columbia</strain>
    </source>
</reference>
<reference key="3">
    <citation type="journal article" date="2007" name="Nature">
        <title>Control of DNA methylation and heterochromatic silencing by histone H2B deubiquitination.</title>
        <authorList>
            <person name="Sridhar V.V."/>
            <person name="Kapoor A."/>
            <person name="Zhang K."/>
            <person name="Zhu J."/>
            <person name="Zhou T."/>
            <person name="Hasegawa P.M."/>
            <person name="Bressan R.A."/>
            <person name="Zhu J.-K."/>
        </authorList>
    </citation>
    <scope>UBIQUITINATION AT LYS-128</scope>
    <scope>IDENTIFICATION BY MASS SPECTROMETRY</scope>
</reference>
<feature type="initiator methionine" description="Removed" evidence="3">
    <location>
        <position position="1"/>
    </location>
</feature>
<feature type="chain" id="PRO_0000238696" description="Histone H2B.9">
    <location>
        <begin position="2"/>
        <end position="132"/>
    </location>
</feature>
<feature type="region of interest" description="Disordered" evidence="5">
    <location>
        <begin position="1"/>
        <end position="41"/>
    </location>
</feature>
<feature type="compositionally biased region" description="Basic and acidic residues" evidence="5">
    <location>
        <begin position="1"/>
        <end position="11"/>
    </location>
</feature>
<feature type="modified residue" description="N,N,N-trimethylalanine; alternate" evidence="3">
    <location>
        <position position="2"/>
    </location>
</feature>
<feature type="modified residue" description="N,N-dimethylalanine; alternate" evidence="3">
    <location>
        <position position="2"/>
    </location>
</feature>
<feature type="modified residue" description="N-methylalanine; alternate" evidence="3">
    <location>
        <position position="2"/>
    </location>
</feature>
<feature type="modified residue" description="N6-methyllysine" evidence="4">
    <location>
        <position position="4"/>
    </location>
</feature>
<feature type="modified residue" description="N6-acetyllysine" evidence="3">
    <location>
        <position position="7"/>
    </location>
</feature>
<feature type="modified residue" description="N6-acetyllysine" evidence="2">
    <location>
        <position position="12"/>
    </location>
</feature>
<feature type="modified residue" description="N6-acetyllysine" evidence="3">
    <location>
        <position position="20"/>
    </location>
</feature>
<feature type="modified residue" description="N6-acetyllysine" evidence="3">
    <location>
        <position position="21"/>
    </location>
</feature>
<feature type="cross-link" description="Glycyl lysine isopeptide (Lys-Gly) (interchain with G-Cter in ubiquitin)" evidence="3">
    <location>
        <position position="128"/>
    </location>
</feature>
<accession>Q9LZ45</accession>
<proteinExistence type="evidence at protein level"/>
<comment type="function">
    <text>Core component of nucleosome. Nucleosomes wrap and compact DNA into chromatin, limiting DNA accessibility to the cellular machineries which require DNA as a template. Histones thereby play a central role in transcription regulation, DNA repair, DNA replication and chromosomal stability. DNA accessibility is regulated via a complex set of post-translational modifications of histones, also called histone code, and nucleosome remodeling.</text>
</comment>
<comment type="subunit">
    <text>The nucleosome is a histone octamer containing two molecules each of H2A, H2B, H3 and H4 assembled in one H3-H4 heterotetramer and two H2A-H2B heterodimers. The octamer wraps approximately 147 bp of DNA.</text>
</comment>
<comment type="subcellular location">
    <subcellularLocation>
        <location evidence="1">Nucleus</location>
    </subcellularLocation>
    <subcellularLocation>
        <location evidence="1">Chromosome</location>
    </subcellularLocation>
</comment>
<comment type="PTM">
    <text evidence="1">Can be acetylated to form H2BK6ac, H2BK33ac and H2BK34ac.</text>
</comment>
<comment type="PTM">
    <text>Monoubiquitinated by BRE1 to form H2BK143ub1 and deubiquitinated by UBP26. Required for heterochromatic histone H3 di- and trimethylation at H3K4me. May give a specific tag for epigenetic transcriptional activation.</text>
</comment>
<comment type="similarity">
    <text evidence="6">Belongs to the histone H2B family.</text>
</comment>
<comment type="caution">
    <text evidence="6">To ensure consistency between histone entries, we follow the 'Brno' nomenclature for histone modifications, with positions referring to those used in the literature for the 'closest' model organism. Due to slight variations in histone sequences between organisms and to the presence of initiator methionine in UniProtKB/Swiss-Prot sequences, the actual positions of modified amino acids in the sequence generally differ. In this entry the following conventions are used: H2BK6ac = acetylated Lys-7; H2BK33ac = acetylated Lys-20; H2BK34ac = acetylated Lys-21; H2BK143ub1 = monoubiquitinated Lys-128.</text>
</comment>
<evidence type="ECO:0000250" key="1"/>
<evidence type="ECO:0000250" key="2">
    <source>
        <dbReference type="UniProtKB" id="O23629"/>
    </source>
</evidence>
<evidence type="ECO:0000250" key="3">
    <source>
        <dbReference type="UniProtKB" id="Q9LQQ4"/>
    </source>
</evidence>
<evidence type="ECO:0000250" key="4">
    <source>
        <dbReference type="UniProtKB" id="Q9LZT0"/>
    </source>
</evidence>
<evidence type="ECO:0000256" key="5">
    <source>
        <dbReference type="SAM" id="MobiDB-lite"/>
    </source>
</evidence>
<evidence type="ECO:0000305" key="6"/>
<gene>
    <name type="ordered locus">At5g02570</name>
    <name type="ORF">T22P11.160</name>
</gene>
<keyword id="KW-0007">Acetylation</keyword>
<keyword id="KW-0158">Chromosome</keyword>
<keyword id="KW-0238">DNA-binding</keyword>
<keyword id="KW-1017">Isopeptide bond</keyword>
<keyword id="KW-0488">Methylation</keyword>
<keyword id="KW-0544">Nucleosome core</keyword>
<keyword id="KW-0539">Nucleus</keyword>
<keyword id="KW-1185">Reference proteome</keyword>
<keyword id="KW-0832">Ubl conjugation</keyword>
<sequence length="132" mass="14544">MAPKAEKKPAEKAPAPKAEKKIAKEGGTSEIVKKKKKTKKSTETYKIYIFKVLKQVHPDIGISGKAMGIMNSFINDIFEKLAQESSRLARYNKKPTITSREIQTAVRLVLPGELAKHAVSEGTKAVTKFTSS</sequence>
<protein>
    <recommendedName>
        <fullName>Histone H2B.9</fullName>
    </recommendedName>
    <alternativeName>
        <fullName>HTB10</fullName>
    </alternativeName>
</protein>
<organism>
    <name type="scientific">Arabidopsis thaliana</name>
    <name type="common">Mouse-ear cress</name>
    <dbReference type="NCBI Taxonomy" id="3702"/>
    <lineage>
        <taxon>Eukaryota</taxon>
        <taxon>Viridiplantae</taxon>
        <taxon>Streptophyta</taxon>
        <taxon>Embryophyta</taxon>
        <taxon>Tracheophyta</taxon>
        <taxon>Spermatophyta</taxon>
        <taxon>Magnoliopsida</taxon>
        <taxon>eudicotyledons</taxon>
        <taxon>Gunneridae</taxon>
        <taxon>Pentapetalae</taxon>
        <taxon>rosids</taxon>
        <taxon>malvids</taxon>
        <taxon>Brassicales</taxon>
        <taxon>Brassicaceae</taxon>
        <taxon>Camelineae</taxon>
        <taxon>Arabidopsis</taxon>
    </lineage>
</organism>
<dbReference type="EMBL" id="AL162971">
    <property type="protein sequence ID" value="CAB85994.1"/>
    <property type="molecule type" value="Genomic_DNA"/>
</dbReference>
<dbReference type="EMBL" id="CP002688">
    <property type="protein sequence ID" value="AED90491.1"/>
    <property type="molecule type" value="Genomic_DNA"/>
</dbReference>
<dbReference type="PIR" id="T48278">
    <property type="entry name" value="T48278"/>
</dbReference>
<dbReference type="RefSeq" id="NP_195877.1">
    <property type="nucleotide sequence ID" value="NM_120335.2"/>
</dbReference>
<dbReference type="SMR" id="Q9LZ45"/>
<dbReference type="FunCoup" id="Q9LZ45">
    <property type="interactions" value="1338"/>
</dbReference>
<dbReference type="STRING" id="3702.Q9LZ45"/>
<dbReference type="PaxDb" id="3702-AT5G02570.1"/>
<dbReference type="ProteomicsDB" id="230846"/>
<dbReference type="EnsemblPlants" id="AT5G02570.1">
    <property type="protein sequence ID" value="AT5G02570.1"/>
    <property type="gene ID" value="AT5G02570"/>
</dbReference>
<dbReference type="GeneID" id="831878"/>
<dbReference type="Gramene" id="AT5G02570.1">
    <property type="protein sequence ID" value="AT5G02570.1"/>
    <property type="gene ID" value="AT5G02570"/>
</dbReference>
<dbReference type="KEGG" id="ath:AT5G02570"/>
<dbReference type="Araport" id="AT5G02570"/>
<dbReference type="TAIR" id="AT5G02570"/>
<dbReference type="eggNOG" id="KOG1744">
    <property type="taxonomic scope" value="Eukaryota"/>
</dbReference>
<dbReference type="HOGENOM" id="CLU_075666_1_0_1"/>
<dbReference type="InParanoid" id="Q9LZ45"/>
<dbReference type="OMA" id="AQLCQTT"/>
<dbReference type="PhylomeDB" id="Q9LZ45"/>
<dbReference type="CD-CODE" id="4299E36E">
    <property type="entry name" value="Nucleolus"/>
</dbReference>
<dbReference type="PRO" id="PR:Q9LZ45"/>
<dbReference type="Proteomes" id="UP000006548">
    <property type="component" value="Chromosome 5"/>
</dbReference>
<dbReference type="ExpressionAtlas" id="Q9LZ45">
    <property type="expression patterns" value="baseline and differential"/>
</dbReference>
<dbReference type="GO" id="GO:0005730">
    <property type="term" value="C:nucleolus"/>
    <property type="evidence" value="ECO:0007005"/>
    <property type="project" value="TAIR"/>
</dbReference>
<dbReference type="GO" id="GO:0000786">
    <property type="term" value="C:nucleosome"/>
    <property type="evidence" value="ECO:0007669"/>
    <property type="project" value="UniProtKB-KW"/>
</dbReference>
<dbReference type="GO" id="GO:0005886">
    <property type="term" value="C:plasma membrane"/>
    <property type="evidence" value="ECO:0007005"/>
    <property type="project" value="TAIR"/>
</dbReference>
<dbReference type="GO" id="GO:0003677">
    <property type="term" value="F:DNA binding"/>
    <property type="evidence" value="ECO:0007669"/>
    <property type="project" value="UniProtKB-KW"/>
</dbReference>
<dbReference type="GO" id="GO:0046982">
    <property type="term" value="F:protein heterodimerization activity"/>
    <property type="evidence" value="ECO:0007669"/>
    <property type="project" value="InterPro"/>
</dbReference>
<dbReference type="GO" id="GO:0030527">
    <property type="term" value="F:structural constituent of chromatin"/>
    <property type="evidence" value="ECO:0007669"/>
    <property type="project" value="InterPro"/>
</dbReference>
<dbReference type="CDD" id="cd22910">
    <property type="entry name" value="HFD_H2B"/>
    <property type="match status" value="1"/>
</dbReference>
<dbReference type="FunFam" id="1.10.20.10:FF:000014">
    <property type="entry name" value="Histone H2B"/>
    <property type="match status" value="1"/>
</dbReference>
<dbReference type="Gene3D" id="1.10.20.10">
    <property type="entry name" value="Histone, subunit A"/>
    <property type="match status" value="1"/>
</dbReference>
<dbReference type="InterPro" id="IPR009072">
    <property type="entry name" value="Histone-fold"/>
</dbReference>
<dbReference type="InterPro" id="IPR007125">
    <property type="entry name" value="Histone_H2A/H2B/H3"/>
</dbReference>
<dbReference type="InterPro" id="IPR000558">
    <property type="entry name" value="Histone_H2B"/>
</dbReference>
<dbReference type="InterPro" id="IPR055333">
    <property type="entry name" value="HISTONE_H2B_site"/>
</dbReference>
<dbReference type="PANTHER" id="PTHR23428">
    <property type="entry name" value="HISTONE H2B"/>
    <property type="match status" value="1"/>
</dbReference>
<dbReference type="Pfam" id="PF00125">
    <property type="entry name" value="Histone"/>
    <property type="match status" value="1"/>
</dbReference>
<dbReference type="PRINTS" id="PR00621">
    <property type="entry name" value="HISTONEH2B"/>
</dbReference>
<dbReference type="SMART" id="SM00427">
    <property type="entry name" value="H2B"/>
    <property type="match status" value="1"/>
</dbReference>
<dbReference type="SUPFAM" id="SSF47113">
    <property type="entry name" value="Histone-fold"/>
    <property type="match status" value="1"/>
</dbReference>
<dbReference type="PROSITE" id="PS00357">
    <property type="entry name" value="HISTONE_H2B"/>
    <property type="match status" value="1"/>
</dbReference>
<name>H2B9_ARATH</name>